<comment type="function">
    <text evidence="1">An FAD assembly protein, which accelerates covalent attachment of the cofactor into other proteins. Plays an essential role in the assembly of succinate dehydrogenase (SDH, respiratory complex II), an enzyme complex that is a component of both the tricarboxylic acid cycle and the electron transport chain, and which couples the oxidation of succinate to fumarate with the reduction of ubiquinone (coenzyme Q) to ubiquinol. Required for flavinylation (covalent attachment of FAD) of the flavoprotein subunit SdhA of SDH and other flavinylated proteins as well.</text>
</comment>
<comment type="subcellular location">
    <subcellularLocation>
        <location evidence="1">Cytoplasm</location>
    </subcellularLocation>
</comment>
<comment type="similarity">
    <text evidence="2">Belongs to the SdhE FAD assembly factor family.</text>
</comment>
<sequence length="82" mass="9641">MELMNIARVRWACRRGMLELDVLFQPFVDNVYQDLSDEDKVLFIRLLECEDPELFAWFMGHEVCPDPELARMVVQVRGRAAP</sequence>
<feature type="chain" id="PRO_0000214423" description="FAD assembly factor SdhE">
    <location>
        <begin position="1"/>
        <end position="82"/>
    </location>
</feature>
<evidence type="ECO:0000250" key="1">
    <source>
        <dbReference type="UniProtKB" id="G4V4G2"/>
    </source>
</evidence>
<evidence type="ECO:0000305" key="2"/>
<name>SDHE_SHEON</name>
<reference key="1">
    <citation type="journal article" date="2002" name="Nat. Biotechnol.">
        <title>Genome sequence of the dissimilatory metal ion-reducing bacterium Shewanella oneidensis.</title>
        <authorList>
            <person name="Heidelberg J.F."/>
            <person name="Paulsen I.T."/>
            <person name="Nelson K.E."/>
            <person name="Gaidos E.J."/>
            <person name="Nelson W.C."/>
            <person name="Read T.D."/>
            <person name="Eisen J.A."/>
            <person name="Seshadri R."/>
            <person name="Ward N.L."/>
            <person name="Methe B.A."/>
            <person name="Clayton R.A."/>
            <person name="Meyer T."/>
            <person name="Tsapin A."/>
            <person name="Scott J."/>
            <person name="Beanan M.J."/>
            <person name="Brinkac L.M."/>
            <person name="Daugherty S.C."/>
            <person name="DeBoy R.T."/>
            <person name="Dodson R.J."/>
            <person name="Durkin A.S."/>
            <person name="Haft D.H."/>
            <person name="Kolonay J.F."/>
            <person name="Madupu R."/>
            <person name="Peterson J.D."/>
            <person name="Umayam L.A."/>
            <person name="White O."/>
            <person name="Wolf A.M."/>
            <person name="Vamathevan J.J."/>
            <person name="Weidman J.F."/>
            <person name="Impraim M."/>
            <person name="Lee K."/>
            <person name="Berry K.J."/>
            <person name="Lee C."/>
            <person name="Mueller J."/>
            <person name="Khouri H.M."/>
            <person name="Gill J."/>
            <person name="Utterback T.R."/>
            <person name="McDonald L.A."/>
            <person name="Feldblyum T.V."/>
            <person name="Smith H.O."/>
            <person name="Venter J.C."/>
            <person name="Nealson K.H."/>
            <person name="Fraser C.M."/>
        </authorList>
    </citation>
    <scope>NUCLEOTIDE SEQUENCE [LARGE SCALE GENOMIC DNA]</scope>
    <source>
        <strain>ATCC 700550 / JCM 31522 / CIP 106686 / LMG 19005 / NCIMB 14063 / MR-1</strain>
    </source>
</reference>
<gene>
    <name type="primary">sdhE</name>
    <name type="ordered locus">SO_1339</name>
</gene>
<keyword id="KW-0143">Chaperone</keyword>
<keyword id="KW-0963">Cytoplasm</keyword>
<keyword id="KW-1185">Reference proteome</keyword>
<organism>
    <name type="scientific">Shewanella oneidensis (strain ATCC 700550 / JCM 31522 / CIP 106686 / LMG 19005 / NCIMB 14063 / MR-1)</name>
    <dbReference type="NCBI Taxonomy" id="211586"/>
    <lineage>
        <taxon>Bacteria</taxon>
        <taxon>Pseudomonadati</taxon>
        <taxon>Pseudomonadota</taxon>
        <taxon>Gammaproteobacteria</taxon>
        <taxon>Alteromonadales</taxon>
        <taxon>Shewanellaceae</taxon>
        <taxon>Shewanella</taxon>
    </lineage>
</organism>
<dbReference type="EMBL" id="AE014299">
    <property type="protein sequence ID" value="AAN54404.1"/>
    <property type="molecule type" value="Genomic_DNA"/>
</dbReference>
<dbReference type="RefSeq" id="NP_716959.1">
    <property type="nucleotide sequence ID" value="NC_004347.2"/>
</dbReference>
<dbReference type="RefSeq" id="WP_011071548.1">
    <property type="nucleotide sequence ID" value="NC_004347.2"/>
</dbReference>
<dbReference type="SMR" id="Q8EH90"/>
<dbReference type="STRING" id="211586.SO_1339"/>
<dbReference type="PaxDb" id="211586-SO_1339"/>
<dbReference type="KEGG" id="son:SO_1339"/>
<dbReference type="PATRIC" id="fig|211586.12.peg.1289"/>
<dbReference type="eggNOG" id="COG2938">
    <property type="taxonomic scope" value="Bacteria"/>
</dbReference>
<dbReference type="HOGENOM" id="CLU_103054_2_2_6"/>
<dbReference type="OrthoDB" id="9180899at2"/>
<dbReference type="PhylomeDB" id="Q8EH90"/>
<dbReference type="BioCyc" id="SONE211586:G1GMP-1237-MONOMER"/>
<dbReference type="Proteomes" id="UP000008186">
    <property type="component" value="Chromosome"/>
</dbReference>
<dbReference type="GO" id="GO:0005737">
    <property type="term" value="C:cytoplasm"/>
    <property type="evidence" value="ECO:0007669"/>
    <property type="project" value="UniProtKB-SubCell"/>
</dbReference>
<dbReference type="GO" id="GO:0006105">
    <property type="term" value="P:succinate metabolic process"/>
    <property type="evidence" value="ECO:0000318"/>
    <property type="project" value="GO_Central"/>
</dbReference>
<dbReference type="FunFam" id="1.10.150.250:FF:000001">
    <property type="entry name" value="FAD assembly factor SdhE"/>
    <property type="match status" value="1"/>
</dbReference>
<dbReference type="Gene3D" id="1.10.150.250">
    <property type="entry name" value="Flavinator of succinate dehydrogenase"/>
    <property type="match status" value="1"/>
</dbReference>
<dbReference type="InterPro" id="IPR005631">
    <property type="entry name" value="SDH"/>
</dbReference>
<dbReference type="InterPro" id="IPR036714">
    <property type="entry name" value="SDH_sf"/>
</dbReference>
<dbReference type="InterPro" id="IPR050531">
    <property type="entry name" value="SdhE_FAD_assembly_factor"/>
</dbReference>
<dbReference type="PANTHER" id="PTHR39585">
    <property type="entry name" value="FAD ASSEMBLY FACTOR SDHE"/>
    <property type="match status" value="1"/>
</dbReference>
<dbReference type="PANTHER" id="PTHR39585:SF1">
    <property type="entry name" value="FAD ASSEMBLY FACTOR SDHE"/>
    <property type="match status" value="1"/>
</dbReference>
<dbReference type="Pfam" id="PF03937">
    <property type="entry name" value="Sdh5"/>
    <property type="match status" value="1"/>
</dbReference>
<dbReference type="SUPFAM" id="SSF109910">
    <property type="entry name" value="YgfY-like"/>
    <property type="match status" value="1"/>
</dbReference>
<proteinExistence type="inferred from homology"/>
<protein>
    <recommendedName>
        <fullName>FAD assembly factor SdhE</fullName>
    </recommendedName>
</protein>
<accession>Q8EH90</accession>